<proteinExistence type="evidence at protein level"/>
<reference key="1">
    <citation type="journal article" date="1992" name="Proc. Natl. Acad. Sci. U.S.A.">
        <title>Molecular cloning and expression of human myocardial cGMP-inhibited cAMP phosphodiesterase.</title>
        <authorList>
            <person name="Meacci E."/>
            <person name="Taira M."/>
            <person name="Moos M. Jr."/>
            <person name="Smith C.J."/>
            <person name="Movsesian M.A."/>
            <person name="Degerman E."/>
            <person name="Belfrage P."/>
            <person name="Manganiello V."/>
        </authorList>
    </citation>
    <scope>NUCLEOTIDE SEQUENCE [MRNA]</scope>
    <scope>FUNCTION</scope>
    <scope>CATALYTIC ACTIVITY</scope>
    <source>
        <tissue>Myocardium</tissue>
    </source>
</reference>
<reference key="2">
    <citation type="submission" date="2003-11" db="EMBL/GenBank/DDBJ databases">
        <authorList>
            <person name="Liu H."/>
            <person name="Manganiello V."/>
        </authorList>
    </citation>
    <scope>SEQUENCE REVISION TO 12; 63-64 AND 354-371</scope>
</reference>
<reference key="3">
    <citation type="journal article" date="1996" name="Blood">
        <title>Human platelet cGI-PDE: expression in yeast and localization of the catalytic domain by deletion mutagenesis.</title>
        <authorList>
            <person name="Cheung P.P."/>
            <person name="Xu H."/>
            <person name="McLaughlin M.M."/>
            <person name="Ghazaleh F.A."/>
            <person name="Livi G.P."/>
            <person name="Colman R.W."/>
        </authorList>
    </citation>
    <scope>NUCLEOTIDE SEQUENCE [MRNA]</scope>
    <scope>VARIANT ASN-12</scope>
    <scope>FUNCTION</scope>
    <scope>CATALYTIC ACTIVITY</scope>
    <scope>ACTIVITY REGULATION</scope>
    <source>
        <tissue>Blood</tissue>
    </source>
</reference>
<reference key="4">
    <citation type="journal article" date="1999" name="Chem. Biol. Interact.">
        <title>Molecular biological characterization of phosphodiesterase 3A from human corpus cavernosum.</title>
        <authorList>
            <person name="Kuthe A."/>
            <person name="Eckel H."/>
            <person name="Stief C.G."/>
            <person name="Uckert S."/>
            <person name="Forssmann W.-G."/>
            <person name="Jonas U."/>
            <person name="Maegert H.-J."/>
        </authorList>
    </citation>
    <scope>NUCLEOTIDE SEQUENCE [MRNA]</scope>
    <source>
        <tissue>Penis</tissue>
    </source>
</reference>
<reference key="5">
    <citation type="journal article" date="2004" name="Genome Res.">
        <title>The status, quality, and expansion of the NIH full-length cDNA project: the Mammalian Gene Collection (MGC).</title>
        <authorList>
            <consortium name="The MGC Project Team"/>
        </authorList>
    </citation>
    <scope>NUCLEOTIDE SEQUENCE [LARGE SCALE MRNA]</scope>
    <source>
        <tissue>Liver</tissue>
    </source>
</reference>
<reference key="6">
    <citation type="journal article" date="1994" name="Biochim. Biophys. Acta">
        <title>Single-step affinity purification, partial structure and properties of human platelet cGMP inhibited cAMP phosphodiesterase.</title>
        <authorList>
            <person name="Degerman E."/>
            <person name="Moos M. Jr."/>
            <person name="Rascon A."/>
            <person name="Vasta V."/>
            <person name="Meacci E."/>
            <person name="Smith C.J."/>
            <person name="Lindgren S."/>
            <person name="Andersson K.-E."/>
            <person name="Belfrage P."/>
            <person name="Manganiello V."/>
        </authorList>
    </citation>
    <scope>PARTIAL PROTEIN SEQUENCE</scope>
    <scope>FUNCTION</scope>
    <scope>CATALYTIC ACTIVITY</scope>
    <scope>BIOPHYSICOCHEMICAL PROPERTIES</scope>
    <scope>ACTIVITY REGULATION</scope>
    <scope>SUBUNIT</scope>
</reference>
<reference key="7">
    <citation type="journal article" date="2006" name="Nat. Biotechnol.">
        <title>A probability-based approach for high-throughput protein phosphorylation analysis and site localization.</title>
        <authorList>
            <person name="Beausoleil S.A."/>
            <person name="Villen J."/>
            <person name="Gerber S.A."/>
            <person name="Rush J."/>
            <person name="Gygi S.P."/>
        </authorList>
    </citation>
    <scope>PHOSPHORYLATION [LARGE SCALE ANALYSIS] AT SER-520</scope>
    <scope>IDENTIFICATION BY MASS SPECTROMETRY [LARGE SCALE ANALYSIS]</scope>
    <source>
        <tissue>Cervix carcinoma</tissue>
    </source>
</reference>
<reference key="8">
    <citation type="journal article" date="2008" name="J. Proteome Res.">
        <title>Phosphoproteome of resting human platelets.</title>
        <authorList>
            <person name="Zahedi R.P."/>
            <person name="Lewandrowski U."/>
            <person name="Wiesner J."/>
            <person name="Wortelkamp S."/>
            <person name="Moebius J."/>
            <person name="Schuetz C."/>
            <person name="Walter U."/>
            <person name="Gambaryan S."/>
            <person name="Sickmann A."/>
        </authorList>
    </citation>
    <scope>IDENTIFICATION BY MASS SPECTROMETRY [LARGE SCALE ANALYSIS]</scope>
    <source>
        <tissue>Platelet</tissue>
    </source>
</reference>
<reference key="9">
    <citation type="journal article" date="2008" name="Proc. Natl. Acad. Sci. U.S.A.">
        <title>A quantitative atlas of mitotic phosphorylation.</title>
        <authorList>
            <person name="Dephoure N."/>
            <person name="Zhou C."/>
            <person name="Villen J."/>
            <person name="Beausoleil S.A."/>
            <person name="Bakalarski C.E."/>
            <person name="Elledge S.J."/>
            <person name="Gygi S.P."/>
        </authorList>
    </citation>
    <scope>PHOSPHORYLATION [LARGE SCALE ANALYSIS] AT SER-312</scope>
    <scope>IDENTIFICATION BY MASS SPECTROMETRY [LARGE SCALE ANALYSIS]</scope>
    <source>
        <tissue>Cervix carcinoma</tissue>
    </source>
</reference>
<reference key="10">
    <citation type="journal article" date="2011" name="BMC Syst. Biol.">
        <title>Initial characterization of the human central proteome.</title>
        <authorList>
            <person name="Burkard T.R."/>
            <person name="Planyavsky M."/>
            <person name="Kaupe I."/>
            <person name="Breitwieser F.P."/>
            <person name="Buerckstuemmer T."/>
            <person name="Bennett K.L."/>
            <person name="Superti-Furga G."/>
            <person name="Colinge J."/>
        </authorList>
    </citation>
    <scope>IDENTIFICATION BY MASS SPECTROMETRY [LARGE SCALE ANALYSIS]</scope>
</reference>
<reference key="11">
    <citation type="journal article" date="2013" name="J. Proteome Res.">
        <title>Toward a comprehensive characterization of a human cancer cell phosphoproteome.</title>
        <authorList>
            <person name="Zhou H."/>
            <person name="Di Palma S."/>
            <person name="Preisinger C."/>
            <person name="Peng M."/>
            <person name="Polat A.N."/>
            <person name="Heck A.J."/>
            <person name="Mohammed S."/>
        </authorList>
    </citation>
    <scope>PHOSPHORYLATION [LARGE SCALE ANALYSIS] AT SER-312; SER-492 AND SER-520</scope>
    <scope>IDENTIFICATION BY MASS SPECTROMETRY [LARGE SCALE ANALYSIS]</scope>
    <source>
        <tissue>Cervix carcinoma</tissue>
    </source>
</reference>
<reference key="12">
    <citation type="journal article" date="2015" name="Nat. Genet.">
        <title>PDE3A mutations cause autosomal dominant hypertension with brachydactyly.</title>
        <authorList>
            <person name="Maass P.G."/>
            <person name="Aydin A."/>
            <person name="Luft F.C."/>
            <person name="Schaechterle C."/>
            <person name="Weise A."/>
            <person name="Stricker S."/>
            <person name="Lindschau C."/>
            <person name="Vaegler M."/>
            <person name="Qadri F."/>
            <person name="Toka H.R."/>
            <person name="Schulz H."/>
            <person name="Krawitz P.M."/>
            <person name="Parkhomchuk D."/>
            <person name="Hecht J."/>
            <person name="Hollfinger I."/>
            <person name="Wefeld-Neuenfeld Y."/>
            <person name="Bartels-Klein E."/>
            <person name="Muehl A."/>
            <person name="Kann M."/>
            <person name="Schuster H."/>
            <person name="Chitayat D."/>
            <person name="Bialer M.G."/>
            <person name="Wienker T.F."/>
            <person name="Ott J."/>
            <person name="Rittscher K."/>
            <person name="Liehr T."/>
            <person name="Jordan J."/>
            <person name="Plessis G."/>
            <person name="Tank J."/>
            <person name="Mai K."/>
            <person name="Naraghi R."/>
            <person name="Hodge R."/>
            <person name="Hopp M."/>
            <person name="Hattenbach L.O."/>
            <person name="Busjahn A."/>
            <person name="Rauch A."/>
            <person name="Vandeput F."/>
            <person name="Gong M."/>
            <person name="Rueschendorf F."/>
            <person name="Huebner N."/>
            <person name="Haller H."/>
            <person name="Mundlos S."/>
            <person name="Bilginturan N."/>
            <person name="Movsesian M.A."/>
            <person name="Klussmann E."/>
            <person name="Toka O."/>
            <person name="Baehring S."/>
        </authorList>
    </citation>
    <scope>INVOLVEMENT IN HTNB</scope>
    <scope>VARIANTS HTNB ALA-445; ASN-445; SER-445; THR-447; VAL-447 AND VAL-449</scope>
    <scope>CHARACTERIZATION OF VARIANTS HTNB ALA-445; ASN-445; SER-445; THR-447; VAL-447 AND VAL-449</scope>
    <scope>FUNCTION</scope>
    <scope>CATALYTIC ACTIVITY</scope>
    <scope>PHOSPHORYLATION AT SER-428 AND SER-438</scope>
</reference>
<reference key="13">
    <citation type="journal article" date="2017" name="Nat. Struct. Mol. Biol.">
        <title>Site-specific mapping of the human SUMO proteome reveals co-modification with phosphorylation.</title>
        <authorList>
            <person name="Hendriks I.A."/>
            <person name="Lyon D."/>
            <person name="Young C."/>
            <person name="Jensen L.J."/>
            <person name="Vertegaal A.C."/>
            <person name="Nielsen M.L."/>
        </authorList>
    </citation>
    <scope>SUMOYLATION [LARGE SCALE ANALYSIS] AT LYS-1120</scope>
    <scope>IDENTIFICATION BY MASS SPECTROMETRY [LARGE SCALE ANALYSIS]</scope>
</reference>
<reference key="14">
    <citation type="journal article" date="2017" name="Naunyn Schmiedebergs Arch. Pharmacol.">
        <title>cUMP hydrolysis by PDE3A.</title>
        <authorList>
            <person name="Berrisch S."/>
            <person name="Ostermeyer J."/>
            <person name="Kaever V."/>
            <person name="Kaelble S."/>
            <person name="Hilfiker-Kleiner D."/>
            <person name="Seifert R."/>
            <person name="Schneider E.H."/>
        </authorList>
    </citation>
    <scope>FUNCTION</scope>
    <scope>CATALYTIC ACTIVITY</scope>
    <scope>BIOPHYSICOCHEMICAL PROPERTIES</scope>
    <scope>ACTIVITY REGULATION</scope>
</reference>
<reference key="15">
    <citation type="journal article" date="2019" name="Mol. Cell">
        <title>Estrogen-Related Hormones Induce Apoptosis by Stabilizing Schlafen-12 Protein Turnover.</title>
        <authorList>
            <person name="Li D."/>
            <person name="Chen J."/>
            <person name="Ai Y."/>
            <person name="Gu X."/>
            <person name="Li L."/>
            <person name="Che D."/>
            <person name="Jiang Z."/>
            <person name="Li L."/>
            <person name="Chen S."/>
            <person name="Huang H."/>
            <person name="Wang J."/>
            <person name="Cai T."/>
            <person name="Cao Y."/>
            <person name="Qi X."/>
            <person name="Wang X."/>
        </authorList>
    </citation>
    <scope>FUNCTION</scope>
    <scope>INTERACTION WITH SLFN12</scope>
</reference>
<reference key="16">
    <citation type="journal article" date="2022" name="Cell Chem. Biol.">
        <title>Multiple PDE3A modulators act as molecular glues promoting PDE3A-SLFN12 interaction and induce SLFN12 dephosphorylation and cell death.</title>
        <authorList>
            <person name="Yan B."/>
            <person name="Ding Z."/>
            <person name="Zhang W."/>
            <person name="Cai G."/>
            <person name="Han H."/>
            <person name="Ma Y."/>
            <person name="Cao Y."/>
            <person name="Wang J."/>
            <person name="Chen S."/>
            <person name="Ai Y."/>
        </authorList>
    </citation>
    <scope>ACTIVITY REGULATION</scope>
    <scope>INTERACTION WITH SLFN12</scope>
    <scope>SUBCELLULAR LOCATION</scope>
    <scope>REGION</scope>
</reference>
<reference evidence="23 24 25 26 27 28" key="17">
    <citation type="journal article" date="2021" name="Nat. Commun.">
        <title>Structure of PDE3A-SLFN12 complex reveals requirements for activation of SLFN12 RNase.</title>
        <authorList>
            <person name="Garvie C.W."/>
            <person name="Wu X."/>
            <person name="Papanastasiou M."/>
            <person name="Lee S."/>
            <person name="Fuller J."/>
            <person name="Schnitzler G.R."/>
            <person name="Horner S.W."/>
            <person name="Baker A."/>
            <person name="Zhang T."/>
            <person name="Mullahoo J.P."/>
            <person name="Westlake L."/>
            <person name="Hoyt S.H."/>
            <person name="Toetzl M."/>
            <person name="Ranaghan M.J."/>
            <person name="de Waal L."/>
            <person name="McGaunn J."/>
            <person name="Kaplan B."/>
            <person name="Piccioni F."/>
            <person name="Yang X."/>
            <person name="Lange M."/>
            <person name="Tersteegen A."/>
            <person name="Raymond D."/>
            <person name="Lewis T.A."/>
            <person name="Carr S.A."/>
            <person name="Cherniack A.D."/>
            <person name="Lemke C.T."/>
            <person name="Meyerson M."/>
            <person name="Greulich H."/>
        </authorList>
    </citation>
    <scope>X-RAY CRYSTALLOGRAPHY (1.70 ANGSTROMS) OF 669-1095 IN COMPLEX WITH SLFN12 AND AMP; MAGNESIUM AND MANGANESE</scope>
    <scope>COFACTOR</scope>
    <scope>SUBUNIT</scope>
    <scope>MUTAGENESIS OF ASN-867 AND PHE-914</scope>
</reference>
<reference evidence="21 22" key="18">
    <citation type="journal article" date="2021" name="Nat. Commun.">
        <title>Structure of PDE3A-SLFN12 complex and structure-based design for a potent apoptosis inducer of tumor cells.</title>
        <authorList>
            <person name="Chen J."/>
            <person name="Liu N."/>
            <person name="Huang Y."/>
            <person name="Wang Y."/>
            <person name="Sun Y."/>
            <person name="Wu Q."/>
            <person name="Li D."/>
            <person name="Gao S."/>
            <person name="Wang H.W."/>
            <person name="Huang N."/>
            <person name="Qi X."/>
            <person name="Wang X."/>
        </authorList>
    </citation>
    <scope>STRUCTURE BY ELECTRON MICROSCOPY (3.20 ANGSTROMS) OF 669-1102 IN COMPLEX WITH SLFN12</scope>
    <scope>FUNCTION</scope>
</reference>
<feature type="chain" id="PRO_0000198799" description="cGMP-inhibited 3',5'-cyclic phosphodiesterase 3A">
    <location>
        <begin position="1"/>
        <end position="1141"/>
    </location>
</feature>
<feature type="transmembrane region" description="Helical" evidence="3">
    <location>
        <begin position="61"/>
        <end position="81"/>
    </location>
</feature>
<feature type="transmembrane region" description="Helical" evidence="3">
    <location>
        <begin position="130"/>
        <end position="150"/>
    </location>
</feature>
<feature type="transmembrane region" description="Helical" evidence="3">
    <location>
        <begin position="160"/>
        <end position="180"/>
    </location>
</feature>
<feature type="transmembrane region" description="Helical" evidence="3">
    <location>
        <begin position="185"/>
        <end position="205"/>
    </location>
</feature>
<feature type="transmembrane region" description="Helical" evidence="3">
    <location>
        <begin position="210"/>
        <end position="230"/>
    </location>
</feature>
<feature type="transmembrane region" description="Helical" evidence="3">
    <location>
        <begin position="232"/>
        <end position="252"/>
    </location>
</feature>
<feature type="domain" description="PDEase" evidence="4">
    <location>
        <begin position="674"/>
        <end position="1093"/>
    </location>
</feature>
<feature type="region of interest" description="Disordered" evidence="5">
    <location>
        <begin position="1"/>
        <end position="42"/>
    </location>
</feature>
<feature type="region of interest" description="Disordered" evidence="5">
    <location>
        <begin position="436"/>
        <end position="482"/>
    </location>
</feature>
<feature type="region of interest" description="Disordered" evidence="5">
    <location>
        <begin position="590"/>
        <end position="640"/>
    </location>
</feature>
<feature type="region of interest" description="Interaction with SLFN12" evidence="12">
    <location>
        <begin position="669"/>
        <end position="1141"/>
    </location>
</feature>
<feature type="region of interest" description="Disordered" evidence="5">
    <location>
        <begin position="1023"/>
        <end position="1062"/>
    </location>
</feature>
<feature type="region of interest" description="Disordered" evidence="5">
    <location>
        <begin position="1100"/>
        <end position="1141"/>
    </location>
</feature>
<feature type="compositionally biased region" description="Low complexity" evidence="5">
    <location>
        <begin position="436"/>
        <end position="448"/>
    </location>
</feature>
<feature type="compositionally biased region" description="Polar residues" evidence="5">
    <location>
        <begin position="465"/>
        <end position="482"/>
    </location>
</feature>
<feature type="compositionally biased region" description="Polar residues" evidence="5">
    <location>
        <begin position="608"/>
        <end position="637"/>
    </location>
</feature>
<feature type="compositionally biased region" description="Acidic residues" evidence="5">
    <location>
        <begin position="1029"/>
        <end position="1056"/>
    </location>
</feature>
<feature type="compositionally biased region" description="Polar residues" evidence="5">
    <location>
        <begin position="1100"/>
        <end position="1113"/>
    </location>
</feature>
<feature type="compositionally biased region" description="Basic and acidic residues" evidence="5">
    <location>
        <begin position="1125"/>
        <end position="1141"/>
    </location>
</feature>
<feature type="active site" description="Proton donor" evidence="1">
    <location>
        <position position="752"/>
    </location>
</feature>
<feature type="binding site" evidence="10 26">
    <location>
        <position position="752"/>
    </location>
    <ligand>
        <name>AMP</name>
        <dbReference type="ChEBI" id="CHEBI:456215"/>
    </ligand>
</feature>
<feature type="binding site" evidence="10 23 24 25 26">
    <location>
        <position position="756"/>
    </location>
    <ligand>
        <name>Mn(2+)</name>
        <dbReference type="ChEBI" id="CHEBI:29035"/>
    </ligand>
</feature>
<feature type="binding site" evidence="10 23 24 25 26">
    <location>
        <position position="836"/>
    </location>
    <ligand>
        <name>Mn(2+)</name>
        <dbReference type="ChEBI" id="CHEBI:29035"/>
    </ligand>
</feature>
<feature type="binding site" evidence="10 26">
    <location>
        <position position="837"/>
    </location>
    <ligand>
        <name>AMP</name>
        <dbReference type="ChEBI" id="CHEBI:456215"/>
    </ligand>
</feature>
<feature type="binding site" evidence="10 23 24 25 26">
    <location>
        <position position="837"/>
    </location>
    <ligand>
        <name>Mg(2+)</name>
        <dbReference type="ChEBI" id="CHEBI:18420"/>
    </ligand>
</feature>
<feature type="binding site" evidence="10 23 24 25 26">
    <location>
        <position position="837"/>
    </location>
    <ligand>
        <name>Mn(2+)</name>
        <dbReference type="ChEBI" id="CHEBI:29035"/>
    </ligand>
</feature>
<feature type="binding site" evidence="10 26">
    <location>
        <position position="950"/>
    </location>
    <ligand>
        <name>AMP</name>
        <dbReference type="ChEBI" id="CHEBI:456215"/>
    </ligand>
</feature>
<feature type="binding site" evidence="10 23 24 25 26">
    <location>
        <position position="950"/>
    </location>
    <ligand>
        <name>Mn(2+)</name>
        <dbReference type="ChEBI" id="CHEBI:29035"/>
    </ligand>
</feature>
<feature type="binding site" evidence="10 26">
    <location>
        <position position="1001"/>
    </location>
    <ligand>
        <name>AMP</name>
        <dbReference type="ChEBI" id="CHEBI:456215"/>
    </ligand>
</feature>
<feature type="modified residue" description="Phosphoserine" evidence="30 31">
    <location>
        <position position="312"/>
    </location>
</feature>
<feature type="modified residue" description="Phosphoserine; by PKA and PKC" evidence="7">
    <location>
        <position position="428"/>
    </location>
</feature>
<feature type="modified residue" description="Phosphoserine; by PKA and PKC" evidence="7">
    <location>
        <position position="438"/>
    </location>
</feature>
<feature type="modified residue" description="Phosphoserine" evidence="31">
    <location>
        <position position="492"/>
    </location>
</feature>
<feature type="modified residue" description="Phosphoserine" evidence="29 31">
    <location>
        <position position="520"/>
    </location>
</feature>
<feature type="modified residue" description="Phosphoserine" evidence="2">
    <location>
        <position position="524"/>
    </location>
</feature>
<feature type="modified residue" description="Phosphoserine" evidence="2">
    <location>
        <position position="1033"/>
    </location>
</feature>
<feature type="modified residue" description="Phosphothreonine" evidence="2">
    <location>
        <position position="1036"/>
    </location>
</feature>
<feature type="cross-link" description="Glycyl lysine isopeptide (Lys-Gly) (interchain with G-Cter in SUMO2)" evidence="32">
    <location>
        <position position="1120"/>
    </location>
</feature>
<feature type="sequence variant" id="VAR_059543" description="In dbSNP:rs12305038." evidence="14">
    <original>D</original>
    <variation>N</variation>
    <location>
        <position position="12"/>
    </location>
</feature>
<feature type="sequence variant" id="VAR_073869" description="In HTNB; increased 3',5'-cyclic-AMP phosphodiesterase activity; increased function in cAMP-mediated signaling; dbSNP:rs794726865." evidence="7">
    <original>T</original>
    <variation>A</variation>
    <location>
        <position position="445"/>
    </location>
</feature>
<feature type="sequence variant" id="VAR_073870" description="In HTNB; increased phosphorylation at S-428 and S-438; increased affinity for 3',5'-cyclic-AMP; no effect on protein reaction kinetics for 3',5'-cyclic-AMP phosphodiesterase activity; increased 3',5'-cyclic-AMP phosphodiesterase activity; no effect on inhibition by 3',5'-cyclic-GMP; changed function in cAMP-mediated signaling; dbSNP:rs794726864." evidence="7">
    <original>T</original>
    <variation>N</variation>
    <location>
        <position position="445"/>
    </location>
</feature>
<feature type="sequence variant" id="VAR_073871" description="In HTNB; increased 3',5'-cyclic-AMP phosphodiesterase activity; changed function in cAMP-mediated signaling; dbSNP:rs794726864." evidence="7">
    <original>T</original>
    <variation>S</variation>
    <location>
        <position position="445"/>
    </location>
</feature>
<feature type="sequence variant" id="VAR_073872" description="In HTNB; increased 3',5'-cyclic-AMP phosphodiesterase activity; changed function in cAMP-mediated signaling; dbSNP:rs794726866." evidence="7">
    <original>A</original>
    <variation>T</variation>
    <location>
        <position position="447"/>
    </location>
</feature>
<feature type="sequence variant" id="VAR_073873" description="In HTNB; increased 3',5'-cyclic-AMP phosphodiesterase activity; changed function in cAMP-mediated signaling; dbSNP:rs794726867." evidence="7">
    <original>A</original>
    <variation>V</variation>
    <location>
        <position position="447"/>
    </location>
</feature>
<feature type="sequence variant" id="VAR_073874" description="In HTNB; increased 3',5'-cyclic-AMP phosphodiesterase activity; changed function in cAMP-mediated signaling; dbSNP:rs794726868." evidence="7">
    <original>G</original>
    <variation>V</variation>
    <location>
        <position position="449"/>
    </location>
</feature>
<feature type="mutagenesis site" description="Loss of interaction with SLFN12." evidence="10">
    <original>N</original>
    <variation>R</variation>
    <location>
        <position position="867"/>
    </location>
</feature>
<feature type="mutagenesis site" description="Loss of interaction with SLFN12." evidence="10">
    <original>F</original>
    <variation>D</variation>
    <variation>A</variation>
    <location>
        <position position="914"/>
    </location>
</feature>
<feature type="sequence conflict" description="In Ref. 3; AAB18673." evidence="16" ref="3">
    <original>S</original>
    <variation>C</variation>
    <location>
        <position position="69"/>
    </location>
</feature>
<feature type="sequence conflict" description="In Ref. 3; AAB18673." evidence="16" ref="3">
    <original>G</original>
    <variation>A</variation>
    <location>
        <position position="110"/>
    </location>
</feature>
<feature type="sequence conflict" description="In Ref. 3 and 4; CAA06304." evidence="16" ref="3 4">
    <original>HGLITDLLADPSLPPNVC</original>
    <variation>TASLPTSWQTLLFHQTCA</variation>
    <location>
        <begin position="354"/>
        <end position="371"/>
    </location>
</feature>
<feature type="strand" evidence="34">
    <location>
        <begin position="675"/>
        <end position="678"/>
    </location>
</feature>
<feature type="helix" evidence="34">
    <location>
        <begin position="680"/>
        <end position="682"/>
    </location>
</feature>
<feature type="helix" evidence="34">
    <location>
        <begin position="683"/>
        <end position="686"/>
    </location>
</feature>
<feature type="helix" evidence="34">
    <location>
        <begin position="687"/>
        <end position="690"/>
    </location>
</feature>
<feature type="strand" evidence="35">
    <location>
        <begin position="691"/>
        <end position="693"/>
    </location>
</feature>
<feature type="helix" evidence="34">
    <location>
        <begin position="696"/>
        <end position="703"/>
    </location>
</feature>
<feature type="turn" evidence="35">
    <location>
        <begin position="705"/>
        <end position="707"/>
    </location>
</feature>
<feature type="helix" evidence="34">
    <location>
        <begin position="710"/>
        <end position="721"/>
    </location>
</feature>
<feature type="helix" evidence="34">
    <location>
        <begin position="724"/>
        <end position="727"/>
    </location>
</feature>
<feature type="helix" evidence="34">
    <location>
        <begin position="732"/>
        <end position="744"/>
    </location>
</feature>
<feature type="strand" evidence="34">
    <location>
        <begin position="750"/>
        <end position="753"/>
    </location>
</feature>
<feature type="helix" evidence="34">
    <location>
        <begin position="754"/>
        <end position="769"/>
    </location>
</feature>
<feature type="strand" evidence="35">
    <location>
        <begin position="812"/>
        <end position="815"/>
    </location>
</feature>
<feature type="helix" evidence="34">
    <location>
        <begin position="817"/>
        <end position="819"/>
    </location>
</feature>
<feature type="helix" evidence="34">
    <location>
        <begin position="823"/>
        <end position="835"/>
    </location>
</feature>
<feature type="turn" evidence="34">
    <location>
        <begin position="836"/>
        <end position="839"/>
    </location>
</feature>
<feature type="helix" evidence="34">
    <location>
        <begin position="845"/>
        <end position="850"/>
    </location>
</feature>
<feature type="helix" evidence="34">
    <location>
        <begin position="854"/>
        <end position="858"/>
    </location>
</feature>
<feature type="turn" evidence="34">
    <location>
        <begin position="859"/>
        <end position="861"/>
    </location>
</feature>
<feature type="helix" evidence="34">
    <location>
        <begin position="864"/>
        <end position="879"/>
    </location>
</feature>
<feature type="helix" evidence="34">
    <location>
        <begin position="881"/>
        <end position="883"/>
    </location>
</feature>
<feature type="turn" evidence="34">
    <location>
        <begin position="885"/>
        <end position="888"/>
    </location>
</feature>
<feature type="helix" evidence="34">
    <location>
        <begin position="891"/>
        <end position="906"/>
    </location>
</feature>
<feature type="helix" evidence="34">
    <location>
        <begin position="910"/>
        <end position="912"/>
    </location>
</feature>
<feature type="helix" evidence="34">
    <location>
        <begin position="913"/>
        <end position="925"/>
    </location>
</feature>
<feature type="strand" evidence="34">
    <location>
        <begin position="926"/>
        <end position="928"/>
    </location>
</feature>
<feature type="strand" evidence="33">
    <location>
        <begin position="932"/>
        <end position="934"/>
    </location>
</feature>
<feature type="helix" evidence="34">
    <location>
        <begin position="935"/>
        <end position="950"/>
    </location>
</feature>
<feature type="helix" evidence="34">
    <location>
        <begin position="953"/>
        <end position="955"/>
    </location>
</feature>
<feature type="helix" evidence="34">
    <location>
        <begin position="958"/>
        <end position="981"/>
    </location>
</feature>
<feature type="strand" evidence="35">
    <location>
        <begin position="992"/>
        <end position="994"/>
    </location>
</feature>
<feature type="helix" evidence="34">
    <location>
        <begin position="997"/>
        <end position="1007"/>
    </location>
</feature>
<feature type="helix" evidence="34">
    <location>
        <begin position="1009"/>
        <end position="1018"/>
    </location>
</feature>
<feature type="strand" evidence="35">
    <location>
        <begin position="1025"/>
        <end position="1027"/>
    </location>
</feature>
<feature type="strand" evidence="35">
    <location>
        <begin position="1070"/>
        <end position="1072"/>
    </location>
</feature>
<feature type="helix" evidence="34">
    <location>
        <begin position="1074"/>
        <end position="1091"/>
    </location>
</feature>
<name>PDE3A_HUMAN</name>
<organism>
    <name type="scientific">Homo sapiens</name>
    <name type="common">Human</name>
    <dbReference type="NCBI Taxonomy" id="9606"/>
    <lineage>
        <taxon>Eukaryota</taxon>
        <taxon>Metazoa</taxon>
        <taxon>Chordata</taxon>
        <taxon>Craniata</taxon>
        <taxon>Vertebrata</taxon>
        <taxon>Euteleostomi</taxon>
        <taxon>Mammalia</taxon>
        <taxon>Eutheria</taxon>
        <taxon>Euarchontoglires</taxon>
        <taxon>Primates</taxon>
        <taxon>Haplorrhini</taxon>
        <taxon>Catarrhini</taxon>
        <taxon>Hominidae</taxon>
        <taxon>Homo</taxon>
    </lineage>
</organism>
<gene>
    <name evidence="20" type="primary">PDE3A</name>
</gene>
<accession>Q14432</accession>
<accession>O60865</accession>
<accession>Q13348</accession>
<accession>Q17RD1</accession>
<comment type="function">
    <text evidence="6 7 8 9 11 13 14">Cyclic nucleotide phosphodiesterase with specificity for the second messengers cAMP and cGMP, which are key regulators of many important physiological processes (PubMed:1315035, PubMed:25961942, PubMed:8155697, PubMed:8695850). Also has activity toward cUMP (PubMed:27975297). Independently of its catalytic activity it is part of an E2/17beta-estradiol-induced pro-apoptotic signaling pathway. E2 stabilizes the PDE3A/SLFN12 complex in the cytosol, promoting the dephosphorylation of SLFN12 and activating its pro-apoptotic ribosomal RNA/rRNA ribonuclease activity. This apoptotic pathway might be relevant in tissues with high concentration of E2 and be for instance involved in placenta remodeling (PubMed:31420216, PubMed:34707099).</text>
</comment>
<comment type="catalytic activity">
    <reaction evidence="6 7 13 14">
        <text>a nucleoside 3',5'-cyclic phosphate + H2O = a nucleoside 5'-phosphate + H(+)</text>
        <dbReference type="Rhea" id="RHEA:14653"/>
        <dbReference type="ChEBI" id="CHEBI:15377"/>
        <dbReference type="ChEBI" id="CHEBI:15378"/>
        <dbReference type="ChEBI" id="CHEBI:57867"/>
        <dbReference type="ChEBI" id="CHEBI:58464"/>
        <dbReference type="EC" id="3.1.4.17"/>
    </reaction>
    <physiologicalReaction direction="left-to-right" evidence="17">
        <dbReference type="Rhea" id="RHEA:14654"/>
    </physiologicalReaction>
</comment>
<comment type="catalytic activity">
    <reaction evidence="6 7 13 14">
        <text>3',5'-cyclic AMP + H2O = AMP + H(+)</text>
        <dbReference type="Rhea" id="RHEA:25277"/>
        <dbReference type="ChEBI" id="CHEBI:15377"/>
        <dbReference type="ChEBI" id="CHEBI:15378"/>
        <dbReference type="ChEBI" id="CHEBI:58165"/>
        <dbReference type="ChEBI" id="CHEBI:456215"/>
    </reaction>
    <physiologicalReaction direction="left-to-right" evidence="17">
        <dbReference type="Rhea" id="RHEA:25278"/>
    </physiologicalReaction>
</comment>
<comment type="catalytic activity">
    <reaction evidence="13">
        <text>3',5'-cyclic GMP + H2O = GMP + H(+)</text>
        <dbReference type="Rhea" id="RHEA:16957"/>
        <dbReference type="ChEBI" id="CHEBI:15377"/>
        <dbReference type="ChEBI" id="CHEBI:15378"/>
        <dbReference type="ChEBI" id="CHEBI:57746"/>
        <dbReference type="ChEBI" id="CHEBI:58115"/>
    </reaction>
    <physiologicalReaction direction="left-to-right" evidence="19">
        <dbReference type="Rhea" id="RHEA:16958"/>
    </physiologicalReaction>
</comment>
<comment type="catalytic activity">
    <reaction evidence="8">
        <text>3',5'-cyclic UMP + H2O = UMP + H(+)</text>
        <dbReference type="Rhea" id="RHEA:70575"/>
        <dbReference type="ChEBI" id="CHEBI:15377"/>
        <dbReference type="ChEBI" id="CHEBI:15378"/>
        <dbReference type="ChEBI" id="CHEBI:57865"/>
        <dbReference type="ChEBI" id="CHEBI:184387"/>
    </reaction>
    <physiologicalReaction direction="left-to-right" evidence="18">
        <dbReference type="Rhea" id="RHEA:70576"/>
    </physiologicalReaction>
</comment>
<comment type="cofactor">
    <cofactor evidence="10">
        <name>Mn(2+)</name>
        <dbReference type="ChEBI" id="CHEBI:29035"/>
    </cofactor>
    <text evidence="10">Binds 2 divalent metal cations per subunit.</text>
</comment>
<comment type="cofactor">
    <cofactor evidence="10">
        <name>Mg(2+)</name>
        <dbReference type="ChEBI" id="CHEBI:18420"/>
    </cofactor>
    <text evidence="10">Binds 2 divalent metal cations per subunit.</text>
</comment>
<comment type="activity regulation">
    <text evidence="8 12 13 14">Inhibited by cGMP (PubMed:8155697, PubMed:8695850). Inhibited by 17beta-estradiol (PubMed:35104454). Inhibited by milrinone (PubMed:27975297).</text>
</comment>
<comment type="biophysicochemical properties">
    <kinetics>
        <KM evidence="13">0.2 uM for 3',5'-cyclic AMP</KM>
        <KM evidence="13">0.3 uM for 3',5'-cyclic GMP</KM>
        <KM evidence="8">98.8 uM for 3',5'-cyclic UMP</KM>
        <Vmax evidence="13">6.1 umol/min/mg enzyme with 3',5'-cyclic AMP as substrate</Vmax>
        <Vmax evidence="13">0.9 umol/min/mg enzyme with 3',5'-cyclic GMP as substrate</Vmax>
        <Vmax evidence="13">38.6 umol/min/mg enzyme with 3',5'-cyclic UMP as substrate</Vmax>
    </kinetics>
</comment>
<comment type="subunit">
    <text evidence="9 10 11 12 13">Homodimer (PubMed:34272366, PubMed:8155697). Interacts with SLFN12; direct low affinity interaction which is stimulated by binding of 17beta-estradiol/E2 to PDE3A and that positively regulates the ribonuclease activity of SLFN12 (PubMed:31420216, PubMed:34272366, PubMed:34707099, PubMed:35104454).</text>
</comment>
<comment type="interaction">
    <interactant intactId="EBI-7192066">
        <id>Q14432</id>
    </interactant>
    <interactant intactId="EBI-1044254">
        <id>Q9Y6D6</id>
        <label>ARFGEF1</label>
    </interactant>
    <organismsDiffer>false</organismsDiffer>
    <experiments>6</experiments>
</comment>
<comment type="interaction">
    <interactant intactId="EBI-7192066">
        <id>Q14432</id>
    </interactant>
    <interactant intactId="EBI-2837511">
        <id>Q9Y6D5</id>
        <label>ARFGEF2</label>
    </interactant>
    <organismsDiffer>false</organismsDiffer>
    <experiments>5</experiments>
</comment>
<comment type="subcellular location">
    <subcellularLocation>
        <location evidence="2">Membrane</location>
        <topology evidence="3">Multi-pass membrane protein</topology>
    </subcellularLocation>
    <subcellularLocation>
        <location evidence="12">Cytoplasm</location>
        <location evidence="12">Cytosol</location>
    </subcellularLocation>
</comment>
<comment type="disease" evidence="7">
    <disease id="DI-04464">
        <name>Hypertension and brachydactyly syndrome</name>
        <acronym>HTNB</acronym>
        <description>A syndrome characterized by brachydactyly type E, severe salt-independent but age-dependent hypertension, an increased fibroblast growth rate, neurovascular contact at the rostral-ventrolateral medulla, and altered baroreflex blood pressure regulation. It results in death from stroke before age 50 years when untreated. Brachydactyly type E is characterized by shortening of the fingers mainly in the metacarpals and metatarsals.</description>
        <dbReference type="MIM" id="112410"/>
    </disease>
    <text>The disease is caused by variants affecting the gene represented in this entry.</text>
</comment>
<comment type="similarity">
    <text evidence="16">Belongs to the cyclic nucleotide phosphodiesterase family. PDE3 subfamily.</text>
</comment>
<comment type="online information" name="Wikipedia">
    <link uri="https://en.wikipedia.org/wiki/PDE3"/>
    <text>PDE3 entry</text>
</comment>
<evidence type="ECO:0000250" key="1">
    <source>
        <dbReference type="UniProtKB" id="O76083"/>
    </source>
</evidence>
<evidence type="ECO:0000250" key="2">
    <source>
        <dbReference type="UniProtKB" id="Q9Z0X4"/>
    </source>
</evidence>
<evidence type="ECO:0000255" key="3"/>
<evidence type="ECO:0000255" key="4">
    <source>
        <dbReference type="PROSITE-ProRule" id="PRU01192"/>
    </source>
</evidence>
<evidence type="ECO:0000256" key="5">
    <source>
        <dbReference type="SAM" id="MobiDB-lite"/>
    </source>
</evidence>
<evidence type="ECO:0000269" key="6">
    <source>
    </source>
</evidence>
<evidence type="ECO:0000269" key="7">
    <source>
    </source>
</evidence>
<evidence type="ECO:0000269" key="8">
    <source>
    </source>
</evidence>
<evidence type="ECO:0000269" key="9">
    <source>
    </source>
</evidence>
<evidence type="ECO:0000269" key="10">
    <source>
    </source>
</evidence>
<evidence type="ECO:0000269" key="11">
    <source>
    </source>
</evidence>
<evidence type="ECO:0000269" key="12">
    <source>
    </source>
</evidence>
<evidence type="ECO:0000269" key="13">
    <source>
    </source>
</evidence>
<evidence type="ECO:0000269" key="14">
    <source>
    </source>
</evidence>
<evidence type="ECO:0000303" key="15">
    <source>
    </source>
</evidence>
<evidence type="ECO:0000305" key="16"/>
<evidence type="ECO:0000305" key="17">
    <source>
    </source>
</evidence>
<evidence type="ECO:0000305" key="18">
    <source>
    </source>
</evidence>
<evidence type="ECO:0000305" key="19">
    <source>
    </source>
</evidence>
<evidence type="ECO:0000312" key="20">
    <source>
        <dbReference type="HGNC" id="HGNC:8778"/>
    </source>
</evidence>
<evidence type="ECO:0007744" key="21">
    <source>
        <dbReference type="PDB" id="7EG0"/>
    </source>
</evidence>
<evidence type="ECO:0007744" key="22">
    <source>
        <dbReference type="PDB" id="7EG4"/>
    </source>
</evidence>
<evidence type="ECO:0007744" key="23">
    <source>
        <dbReference type="PDB" id="7KWE"/>
    </source>
</evidence>
<evidence type="ECO:0007744" key="24">
    <source>
        <dbReference type="PDB" id="7L27"/>
    </source>
</evidence>
<evidence type="ECO:0007744" key="25">
    <source>
        <dbReference type="PDB" id="7L28"/>
    </source>
</evidence>
<evidence type="ECO:0007744" key="26">
    <source>
        <dbReference type="PDB" id="7L29"/>
    </source>
</evidence>
<evidence type="ECO:0007744" key="27">
    <source>
        <dbReference type="PDB" id="7LRC"/>
    </source>
</evidence>
<evidence type="ECO:0007744" key="28">
    <source>
        <dbReference type="PDB" id="7LRD"/>
    </source>
</evidence>
<evidence type="ECO:0007744" key="29">
    <source>
    </source>
</evidence>
<evidence type="ECO:0007744" key="30">
    <source>
    </source>
</evidence>
<evidence type="ECO:0007744" key="31">
    <source>
    </source>
</evidence>
<evidence type="ECO:0007744" key="32">
    <source>
    </source>
</evidence>
<evidence type="ECO:0007829" key="33">
    <source>
        <dbReference type="PDB" id="7EG4"/>
    </source>
</evidence>
<evidence type="ECO:0007829" key="34">
    <source>
        <dbReference type="PDB" id="7L27"/>
    </source>
</evidence>
<evidence type="ECO:0007829" key="35">
    <source>
        <dbReference type="PDB" id="7LRC"/>
    </source>
</evidence>
<keyword id="KW-0002">3D-structure</keyword>
<keyword id="KW-0114">cAMP</keyword>
<keyword id="KW-0140">cGMP</keyword>
<keyword id="KW-0963">Cytoplasm</keyword>
<keyword id="KW-0903">Direct protein sequencing</keyword>
<keyword id="KW-0225">Disease variant</keyword>
<keyword id="KW-0378">Hydrolase</keyword>
<keyword id="KW-1017">Isopeptide bond</keyword>
<keyword id="KW-0464">Manganese</keyword>
<keyword id="KW-0472">Membrane</keyword>
<keyword id="KW-0479">Metal-binding</keyword>
<keyword id="KW-0597">Phosphoprotein</keyword>
<keyword id="KW-1267">Proteomics identification</keyword>
<keyword id="KW-1185">Reference proteome</keyword>
<keyword id="KW-0812">Transmembrane</keyword>
<keyword id="KW-1133">Transmembrane helix</keyword>
<keyword id="KW-0832">Ubl conjugation</keyword>
<sequence length="1141" mass="124979">MAVPGDAARVRDKPVHSGVSQAPTAGRDCHHRADPASPRDSGCRGCWGDLVLQPLRSSRKLSSALCAGSLSFLLALLVRLVRGEVGCDLEQCKEAAAAEEEEAAPGAEGGVFPGPRGGAPGGGARLSPWLQPSALLFSLLCAFFWMGLYLLRAGVRLPLAVALLAACCGGEALVQIGLGVGEDHLLSLPAAGVVLSCLAAATWLVLRLRLGVLMIALTSAVRTVSLISLERFKVAWRPYLAYLAGVLGILLARYVEQILPQSAEAAPREHLGSQLIAGTKEDIPVFKRRRRSSSVVSAEMSGCSSKSHRRTSLPCIPREQLMGHSEWDHKRGPRGSQSSGTSITVDIAVMGEAHGLITDLLADPSLPPNVCTSLRAVSNLLSTQLTFQAIHKPRVNPVTSLSENYTCSDSEESSEKDKLAIPKRLRRSLPPGLLRRVSSTWTTTTSATGLPTLEPAPVRRDRSTSIKLQEAPSSSPDSWNNPVMMTLTKSRSFTSSYAISAANHVKAKKQSRPGALAKISPLSSPCSSPLQGTPASSLVSKISAVQFPESADTTAKQSLGSHRALTYTQSAPDLSPQILTPPVICSSCGRPYSQGNPADEPLERSGVATRTPSRTDDTAQVTSDYETNNNSDSSDIVQNEDETECLREPLRKASACSTYAPETMMFLDKPILAPEPLVMDNLDSIMEQLNTWNFPIFDLVENIGRKCGRILSQVSYRLFEDMGLFEAFKIPIREFMNYFHALEIGYRDIPYHNRIHATDVLHAVWYLTTQPIPGLSTVINDHGSTSDSDSDSGFTHGHMGYVFSKTYNVTDDKYGCLSGNIPALELMALYVAAAMHDYDHPGRTNAFLVATSAPQAVLYNDRSVLENHHAAAAWNLFMSRPEYNFLINLDHVEFKHFRFLVIEAILATDLKKHFDFVAKFNGKVNDDVGIDWTNENDRLLVCQMCIKLADINGPAKCKELHLQWTDGIVNEFYEQGDEEASLGLPISPFMDRSAPQLANLQESFISHIVGPLCNSYDSAGLMPGKWVEDSDESGDTDDPEEEEEEAPAPNEEETCENNESPKKKTFKRRKIYCQITQHLLQNHKMWKKVIEEEQRLAGIENQSLDQTPQSHSSEQIQAIKEEEEEKGKPRGEEIPTQKPDQ</sequence>
<protein>
    <recommendedName>
        <fullName evidence="19">cGMP-inhibited 3',5'-cyclic phosphodiesterase 3A</fullName>
        <ecNumber evidence="6 7 13 14">3.1.4.17</ecNumber>
    </recommendedName>
    <alternativeName>
        <fullName>Cyclic GMP-inhibited phosphodiesterase A</fullName>
        <shortName>CGI-PDE A</shortName>
    </alternativeName>
    <alternativeName>
        <fullName evidence="15">cGMP-inhibited cAMP phosphodiesterase</fullName>
        <shortName evidence="15">cGI-PDE</shortName>
    </alternativeName>
</protein>
<dbReference type="EC" id="3.1.4.17" evidence="6 7 13 14"/>
<dbReference type="EMBL" id="M91667">
    <property type="protein sequence ID" value="AAA35912.2"/>
    <property type="molecule type" value="mRNA"/>
</dbReference>
<dbReference type="EMBL" id="U36798">
    <property type="protein sequence ID" value="AAB18673.1"/>
    <property type="molecule type" value="mRNA"/>
</dbReference>
<dbReference type="EMBL" id="AJ005036">
    <property type="protein sequence ID" value="CAA06304.1"/>
    <property type="molecule type" value="mRNA"/>
</dbReference>
<dbReference type="EMBL" id="BC117369">
    <property type="protein sequence ID" value="AAI17370.1"/>
    <property type="molecule type" value="mRNA"/>
</dbReference>
<dbReference type="EMBL" id="BC117371">
    <property type="protein sequence ID" value="AAI17372.1"/>
    <property type="molecule type" value="mRNA"/>
</dbReference>
<dbReference type="CCDS" id="CCDS31754.1"/>
<dbReference type="PIR" id="A44093">
    <property type="entry name" value="A44093"/>
</dbReference>
<dbReference type="RefSeq" id="NP_000912.3">
    <property type="nucleotide sequence ID" value="NM_000921.4"/>
</dbReference>
<dbReference type="PDB" id="7EG0">
    <property type="method" value="EM"/>
    <property type="resolution" value="3.40 A"/>
    <property type="chains" value="A/C=669-1102"/>
</dbReference>
<dbReference type="PDB" id="7EG1">
    <property type="method" value="EM"/>
    <property type="resolution" value="3.20 A"/>
    <property type="chains" value="A/C=669-1102"/>
</dbReference>
<dbReference type="PDB" id="7EG4">
    <property type="method" value="EM"/>
    <property type="resolution" value="3.20 A"/>
    <property type="chains" value="A/C=669-1102"/>
</dbReference>
<dbReference type="PDB" id="7KWE">
    <property type="method" value="X-ray"/>
    <property type="resolution" value="2.00 A"/>
    <property type="chains" value="A/B/C/D=669-779, A/B/C/D=801-1028, A/B/C/D=1068-1095"/>
</dbReference>
<dbReference type="PDB" id="7L27">
    <property type="method" value="X-ray"/>
    <property type="resolution" value="1.70 A"/>
    <property type="chains" value="A/B/C/D=669-779, A/B/C/D=801-1028, A/B/C/D=1068-1095"/>
</dbReference>
<dbReference type="PDB" id="7L28">
    <property type="method" value="X-ray"/>
    <property type="resolution" value="2.20 A"/>
    <property type="chains" value="A/B/C/D=669-779, A/B/C/D=801-1028, A/B/C/D=1068-1095"/>
</dbReference>
<dbReference type="PDB" id="7L29">
    <property type="method" value="X-ray"/>
    <property type="resolution" value="2.08 A"/>
    <property type="chains" value="A/B/C/D=669-779, A/B/C/D=801-1028, A/B/C/D=1068-1095"/>
</dbReference>
<dbReference type="PDB" id="7LRC">
    <property type="method" value="EM"/>
    <property type="resolution" value="2.97 A"/>
    <property type="chains" value="B/C=640-1141"/>
</dbReference>
<dbReference type="PDB" id="7LRD">
    <property type="method" value="EM"/>
    <property type="resolution" value="3.22 A"/>
    <property type="chains" value="B/D=640-1141"/>
</dbReference>
<dbReference type="PDBsum" id="7EG0"/>
<dbReference type="PDBsum" id="7EG1"/>
<dbReference type="PDBsum" id="7EG4"/>
<dbReference type="PDBsum" id="7KWE"/>
<dbReference type="PDBsum" id="7L27"/>
<dbReference type="PDBsum" id="7L28"/>
<dbReference type="PDBsum" id="7L29"/>
<dbReference type="PDBsum" id="7LRC"/>
<dbReference type="PDBsum" id="7LRD"/>
<dbReference type="EMDB" id="EMD-23494"/>
<dbReference type="EMDB" id="EMD-23495"/>
<dbReference type="EMDB" id="EMD-31103"/>
<dbReference type="EMDB" id="EMD-31104"/>
<dbReference type="EMDB" id="EMD-31105"/>
<dbReference type="SMR" id="Q14432"/>
<dbReference type="BioGRID" id="111165">
    <property type="interactions" value="83"/>
</dbReference>
<dbReference type="CORUM" id="Q14432"/>
<dbReference type="DIP" id="DIP-42197N"/>
<dbReference type="FunCoup" id="Q14432">
    <property type="interactions" value="1295"/>
</dbReference>
<dbReference type="IntAct" id="Q14432">
    <property type="interactions" value="59"/>
</dbReference>
<dbReference type="MINT" id="Q14432"/>
<dbReference type="STRING" id="9606.ENSP00000351957"/>
<dbReference type="BindingDB" id="Q14432"/>
<dbReference type="ChEMBL" id="CHEMBL241"/>
<dbReference type="DrugBank" id="DB07954">
    <property type="generic name" value="3-isobutyl-1-methyl-7H-xanthine"/>
</dbReference>
<dbReference type="DrugBank" id="DB01223">
    <property type="generic name" value="Aminophylline"/>
</dbReference>
<dbReference type="DrugBank" id="DB01427">
    <property type="generic name" value="Amrinone"/>
</dbReference>
<dbReference type="DrugBank" id="DB00261">
    <property type="generic name" value="Anagrelide"/>
</dbReference>
<dbReference type="DrugBank" id="DB00201">
    <property type="generic name" value="Caffeine"/>
</dbReference>
<dbReference type="DrugBank" id="DB01166">
    <property type="generic name" value="Cilostazol"/>
</dbReference>
<dbReference type="DrugBank" id="DB04880">
    <property type="generic name" value="Enoximone"/>
</dbReference>
<dbReference type="DrugBank" id="DB16157">
    <property type="generic name" value="Ensifentrine"/>
</dbReference>
<dbReference type="DrugBank" id="DB05266">
    <property type="generic name" value="Ibudilast"/>
</dbReference>
<dbReference type="DrugBank" id="DB00922">
    <property type="generic name" value="Levosimendan"/>
</dbReference>
<dbReference type="DrugBank" id="DB00235">
    <property type="generic name" value="Milrinone"/>
</dbReference>
<dbReference type="DrugBank" id="DB01303">
    <property type="generic name" value="Oxtriphylline"/>
</dbReference>
<dbReference type="DrugBank" id="DB00277">
    <property type="generic name" value="Theophylline"/>
</dbReference>
<dbReference type="DrugBank" id="DB08811">
    <property type="generic name" value="Tofisopam"/>
</dbReference>
<dbReference type="DrugBank" id="DB09283">
    <property type="generic name" value="Trapidil"/>
</dbReference>
<dbReference type="DrugBank" id="DB12082">
    <property type="generic name" value="Vesnarinone"/>
</dbReference>
<dbReference type="DrugCentral" id="Q14432"/>
<dbReference type="GuidetoPHARMACOLOGY" id="1298"/>
<dbReference type="GlyGen" id="Q14432">
    <property type="glycosylation" value="2 sites, 1 O-linked glycan (2 sites)"/>
</dbReference>
<dbReference type="iPTMnet" id="Q14432"/>
<dbReference type="PhosphoSitePlus" id="Q14432"/>
<dbReference type="SwissPalm" id="Q14432"/>
<dbReference type="BioMuta" id="PDE3A"/>
<dbReference type="DMDM" id="47117888"/>
<dbReference type="jPOST" id="Q14432"/>
<dbReference type="MassIVE" id="Q14432"/>
<dbReference type="PaxDb" id="9606-ENSP00000351957"/>
<dbReference type="PeptideAtlas" id="Q14432"/>
<dbReference type="ProteomicsDB" id="59987"/>
<dbReference type="Pumba" id="Q14432"/>
<dbReference type="Antibodypedia" id="2869">
    <property type="antibodies" value="252 antibodies from 31 providers"/>
</dbReference>
<dbReference type="DNASU" id="5139"/>
<dbReference type="Ensembl" id="ENST00000359062.4">
    <property type="protein sequence ID" value="ENSP00000351957.3"/>
    <property type="gene ID" value="ENSG00000172572.7"/>
</dbReference>
<dbReference type="GeneID" id="5139"/>
<dbReference type="KEGG" id="hsa:5139"/>
<dbReference type="MANE-Select" id="ENST00000359062.4">
    <property type="protein sequence ID" value="ENSP00000351957.3"/>
    <property type="RefSeq nucleotide sequence ID" value="NM_000921.5"/>
    <property type="RefSeq protein sequence ID" value="NP_000912.3"/>
</dbReference>
<dbReference type="UCSC" id="uc001reh.3">
    <property type="organism name" value="human"/>
</dbReference>
<dbReference type="AGR" id="HGNC:8778"/>
<dbReference type="CTD" id="5139"/>
<dbReference type="DisGeNET" id="5139"/>
<dbReference type="GeneCards" id="PDE3A"/>
<dbReference type="HGNC" id="HGNC:8778">
    <property type="gene designation" value="PDE3A"/>
</dbReference>
<dbReference type="HPA" id="ENSG00000172572">
    <property type="expression patterns" value="Tissue enhanced (heart)"/>
</dbReference>
<dbReference type="MalaCards" id="PDE3A"/>
<dbReference type="MIM" id="112410">
    <property type="type" value="phenotype"/>
</dbReference>
<dbReference type="MIM" id="123805">
    <property type="type" value="gene"/>
</dbReference>
<dbReference type="neXtProt" id="NX_Q14432"/>
<dbReference type="OpenTargets" id="ENSG00000172572"/>
<dbReference type="Orphanet" id="1276">
    <property type="disease" value="Brachydactyly-arterial hypertension syndrome"/>
</dbReference>
<dbReference type="PharmGKB" id="PA33126"/>
<dbReference type="VEuPathDB" id="HostDB:ENSG00000172572"/>
<dbReference type="eggNOG" id="ENOG502QSV8">
    <property type="taxonomic scope" value="Eukaryota"/>
</dbReference>
<dbReference type="GeneTree" id="ENSGT00940000156628"/>
<dbReference type="HOGENOM" id="CLU_008844_0_0_1"/>
<dbReference type="InParanoid" id="Q14432"/>
<dbReference type="OMA" id="CIPREQI"/>
<dbReference type="OrthoDB" id="546632at2759"/>
<dbReference type="PAN-GO" id="Q14432">
    <property type="GO annotations" value="7 GO annotations based on evolutionary models"/>
</dbReference>
<dbReference type="PhylomeDB" id="Q14432"/>
<dbReference type="TreeFam" id="TF329631"/>
<dbReference type="BRENDA" id="3.1.4.17">
    <property type="organism ID" value="2681"/>
</dbReference>
<dbReference type="PathwayCommons" id="Q14432"/>
<dbReference type="Reactome" id="R-HSA-418555">
    <property type="pathway name" value="G alpha (s) signalling events"/>
</dbReference>
<dbReference type="SABIO-RK" id="Q14432"/>
<dbReference type="SignaLink" id="Q14432"/>
<dbReference type="SIGNOR" id="Q14432"/>
<dbReference type="BioGRID-ORCS" id="5139">
    <property type="hits" value="20 hits in 1159 CRISPR screens"/>
</dbReference>
<dbReference type="CD-CODE" id="F345034F">
    <property type="entry name" value="Signaling cluster"/>
</dbReference>
<dbReference type="ChiTaRS" id="PDE3A">
    <property type="organism name" value="human"/>
</dbReference>
<dbReference type="GenomeRNAi" id="5139"/>
<dbReference type="Pharos" id="Q14432">
    <property type="development level" value="Tclin"/>
</dbReference>
<dbReference type="PRO" id="PR:Q14432"/>
<dbReference type="Proteomes" id="UP000005640">
    <property type="component" value="Chromosome 12"/>
</dbReference>
<dbReference type="RNAct" id="Q14432">
    <property type="molecule type" value="protein"/>
</dbReference>
<dbReference type="Bgee" id="ENSG00000172572">
    <property type="expression patterns" value="Expressed in heart right ventricle and 146 other cell types or tissues"/>
</dbReference>
<dbReference type="GO" id="GO:0005829">
    <property type="term" value="C:cytosol"/>
    <property type="evidence" value="ECO:0000314"/>
    <property type="project" value="UniProtKB"/>
</dbReference>
<dbReference type="GO" id="GO:0016020">
    <property type="term" value="C:membrane"/>
    <property type="evidence" value="ECO:0007669"/>
    <property type="project" value="UniProtKB-SubCell"/>
</dbReference>
<dbReference type="GO" id="GO:0004119">
    <property type="term" value="F:3',5'-cGMP-inhibited cyclic-nucleotide phosphodiesterase activity"/>
    <property type="evidence" value="ECO:0000314"/>
    <property type="project" value="UniProtKB"/>
</dbReference>
<dbReference type="GO" id="GO:0004115">
    <property type="term" value="F:3',5'-cyclic-AMP phosphodiesterase activity"/>
    <property type="evidence" value="ECO:0000314"/>
    <property type="project" value="UniProtKB"/>
</dbReference>
<dbReference type="GO" id="GO:0047555">
    <property type="term" value="F:3',5'-cyclic-GMP phosphodiesterase activity"/>
    <property type="evidence" value="ECO:0000314"/>
    <property type="project" value="UniProtKB"/>
</dbReference>
<dbReference type="GO" id="GO:0004114">
    <property type="term" value="F:3',5'-cyclic-nucleotide phosphodiesterase activity"/>
    <property type="evidence" value="ECO:0000314"/>
    <property type="project" value="UniProtKB"/>
</dbReference>
<dbReference type="GO" id="GO:0099130">
    <property type="term" value="F:estrogen binding"/>
    <property type="evidence" value="ECO:0000314"/>
    <property type="project" value="UniProtKB"/>
</dbReference>
<dbReference type="GO" id="GO:0046872">
    <property type="term" value="F:metal ion binding"/>
    <property type="evidence" value="ECO:0007669"/>
    <property type="project" value="UniProtKB-KW"/>
</dbReference>
<dbReference type="GO" id="GO:0030284">
    <property type="term" value="F:nuclear estrogen receptor activity"/>
    <property type="evidence" value="ECO:0000314"/>
    <property type="project" value="UniProt"/>
</dbReference>
<dbReference type="GO" id="GO:0097190">
    <property type="term" value="P:apoptotic signaling pathway"/>
    <property type="evidence" value="ECO:0000314"/>
    <property type="project" value="UniProt"/>
</dbReference>
<dbReference type="GO" id="GO:0019933">
    <property type="term" value="P:cAMP-mediated signaling"/>
    <property type="evidence" value="ECO:0000318"/>
    <property type="project" value="GO_Central"/>
</dbReference>
<dbReference type="GO" id="GO:0071321">
    <property type="term" value="P:cellular response to cGMP"/>
    <property type="evidence" value="ECO:0000314"/>
    <property type="project" value="UniProtKB"/>
</dbReference>
<dbReference type="GO" id="GO:0071560">
    <property type="term" value="P:cellular response to transforming growth factor beta stimulus"/>
    <property type="evidence" value="ECO:0000270"/>
    <property type="project" value="UniProtKB"/>
</dbReference>
<dbReference type="GO" id="GO:0019934">
    <property type="term" value="P:cGMP-mediated signaling"/>
    <property type="evidence" value="ECO:0000315"/>
    <property type="project" value="UniProtKB"/>
</dbReference>
<dbReference type="GO" id="GO:0007186">
    <property type="term" value="P:G protein-coupled receptor signaling pathway"/>
    <property type="evidence" value="ECO:0000304"/>
    <property type="project" value="Reactome"/>
</dbReference>
<dbReference type="GO" id="GO:0006629">
    <property type="term" value="P:lipid metabolic process"/>
    <property type="evidence" value="ECO:0000304"/>
    <property type="project" value="ProtInc"/>
</dbReference>
<dbReference type="GO" id="GO:0106072">
    <property type="term" value="P:negative regulation of adenylate cyclase-activating G protein-coupled receptor signaling pathway"/>
    <property type="evidence" value="ECO:0000315"/>
    <property type="project" value="UniProtKB"/>
</dbReference>
<dbReference type="GO" id="GO:0043066">
    <property type="term" value="P:negative regulation of apoptotic process"/>
    <property type="evidence" value="ECO:0007669"/>
    <property type="project" value="Ensembl"/>
</dbReference>
<dbReference type="GO" id="GO:0141162">
    <property type="term" value="P:negative regulation of cAMP/PKA signal transduction"/>
    <property type="evidence" value="ECO:0007669"/>
    <property type="project" value="Ensembl"/>
</dbReference>
<dbReference type="GO" id="GO:0043116">
    <property type="term" value="P:negative regulation of vascular permeability"/>
    <property type="evidence" value="ECO:0000315"/>
    <property type="project" value="UniProtKB"/>
</dbReference>
<dbReference type="GO" id="GO:0001556">
    <property type="term" value="P:oocyte maturation"/>
    <property type="evidence" value="ECO:0007669"/>
    <property type="project" value="Ensembl"/>
</dbReference>
<dbReference type="GO" id="GO:0060282">
    <property type="term" value="P:positive regulation of oocyte development"/>
    <property type="evidence" value="ECO:0007669"/>
    <property type="project" value="Ensembl"/>
</dbReference>
<dbReference type="GO" id="GO:0043117">
    <property type="term" value="P:positive regulation of vascular permeability"/>
    <property type="evidence" value="ECO:0000315"/>
    <property type="project" value="UniProtKB"/>
</dbReference>
<dbReference type="GO" id="GO:0040020">
    <property type="term" value="P:regulation of meiotic nuclear division"/>
    <property type="evidence" value="ECO:0007669"/>
    <property type="project" value="Ensembl"/>
</dbReference>
<dbReference type="GO" id="GO:0060700">
    <property type="term" value="P:regulation of ribonuclease activity"/>
    <property type="evidence" value="ECO:0000314"/>
    <property type="project" value="UniProtKB"/>
</dbReference>
<dbReference type="GO" id="GO:0009410">
    <property type="term" value="P:response to xenobiotic stimulus"/>
    <property type="evidence" value="ECO:0007669"/>
    <property type="project" value="Ensembl"/>
</dbReference>
<dbReference type="CDD" id="cd00077">
    <property type="entry name" value="HDc"/>
    <property type="match status" value="1"/>
</dbReference>
<dbReference type="FunFam" id="1.10.1300.10:FF:000008">
    <property type="entry name" value="Phosphodiesterase"/>
    <property type="match status" value="1"/>
</dbReference>
<dbReference type="Gene3D" id="1.10.1300.10">
    <property type="entry name" value="3'5'-cyclic nucleotide phosphodiesterase, catalytic domain"/>
    <property type="match status" value="1"/>
</dbReference>
<dbReference type="InterPro" id="IPR003607">
    <property type="entry name" value="HD/PDEase_dom"/>
</dbReference>
<dbReference type="InterPro" id="IPR002073">
    <property type="entry name" value="PDEase_catalytic_dom"/>
</dbReference>
<dbReference type="InterPro" id="IPR036971">
    <property type="entry name" value="PDEase_catalytic_dom_sf"/>
</dbReference>
<dbReference type="InterPro" id="IPR023174">
    <property type="entry name" value="PDEase_CS"/>
</dbReference>
<dbReference type="PANTHER" id="PTHR11347">
    <property type="entry name" value="CYCLIC NUCLEOTIDE PHOSPHODIESTERASE"/>
    <property type="match status" value="1"/>
</dbReference>
<dbReference type="Pfam" id="PF00233">
    <property type="entry name" value="PDEase_I"/>
    <property type="match status" value="1"/>
</dbReference>
<dbReference type="SMART" id="SM00471">
    <property type="entry name" value="HDc"/>
    <property type="match status" value="1"/>
</dbReference>
<dbReference type="SUPFAM" id="SSF109604">
    <property type="entry name" value="HD-domain/PDEase-like"/>
    <property type="match status" value="1"/>
</dbReference>
<dbReference type="PROSITE" id="PS00126">
    <property type="entry name" value="PDEASE_I_1"/>
    <property type="match status" value="1"/>
</dbReference>
<dbReference type="PROSITE" id="PS51845">
    <property type="entry name" value="PDEASE_I_2"/>
    <property type="match status" value="1"/>
</dbReference>